<comment type="function">
    <text evidence="2 5 6 7 8 9 10">Converts guanine to guanosine monophosphate, and hypoxanthine to inosine monophosphate. Transfers the 5-phosphoribosyl group from 5-phosphoribosylpyrophosphate onto the purine. Plays a central role in the generation of purine nucleotides through the purine salvage pathway.</text>
</comment>
<comment type="catalytic activity">
    <reaction evidence="5">
        <text>IMP + diphosphate = hypoxanthine + 5-phospho-alpha-D-ribose 1-diphosphate</text>
        <dbReference type="Rhea" id="RHEA:17973"/>
        <dbReference type="ChEBI" id="CHEBI:17368"/>
        <dbReference type="ChEBI" id="CHEBI:33019"/>
        <dbReference type="ChEBI" id="CHEBI:58017"/>
        <dbReference type="ChEBI" id="CHEBI:58053"/>
        <dbReference type="EC" id="2.4.2.8"/>
    </reaction>
    <physiologicalReaction direction="right-to-left" evidence="5">
        <dbReference type="Rhea" id="RHEA:17975"/>
    </physiologicalReaction>
</comment>
<comment type="catalytic activity">
    <reaction evidence="5">
        <text>GMP + diphosphate = guanine + 5-phospho-alpha-D-ribose 1-diphosphate</text>
        <dbReference type="Rhea" id="RHEA:25424"/>
        <dbReference type="ChEBI" id="CHEBI:16235"/>
        <dbReference type="ChEBI" id="CHEBI:33019"/>
        <dbReference type="ChEBI" id="CHEBI:58017"/>
        <dbReference type="ChEBI" id="CHEBI:58115"/>
        <dbReference type="EC" id="2.4.2.8"/>
    </reaction>
    <physiologicalReaction direction="right-to-left" evidence="5">
        <dbReference type="Rhea" id="RHEA:25426"/>
    </physiologicalReaction>
</comment>
<comment type="cofactor">
    <cofactor>
        <name>Mg(2+)</name>
        <dbReference type="ChEBI" id="CHEBI:18420"/>
    </cofactor>
    <text>The magnesium ions are essentially bound to the substrate and have few direct interactions with the protein.</text>
</comment>
<comment type="activity regulation">
    <text evidence="5">Subject to feedback inhibition by GMP.</text>
</comment>
<comment type="biophysicochemical properties">
    <kinetics>
        <KM evidence="6 7 9">23 uM for hypoxanthine</KM>
        <KM evidence="6 7 9">18 uM for guanine</KM>
        <KM evidence="6 7 9">50 uM for phosphoribosylpyrophosphate</KM>
    </kinetics>
    <phDependence>
        <text evidence="6 7 9">Optimum pH is 8.5.</text>
    </phDependence>
</comment>
<comment type="pathway">
    <text>Purine metabolism; IMP biosynthesis via salvage pathway; IMP from hypoxanthine: step 1/1.</text>
</comment>
<comment type="subunit">
    <text evidence="5 7">Dimer.</text>
</comment>
<comment type="subcellular location">
    <subcellularLocation>
        <location evidence="3">Cytoplasm</location>
    </subcellularLocation>
    <subcellularLocation>
        <location evidence="3">Nucleus</location>
    </subcellularLocation>
</comment>
<comment type="miscellaneous">
    <text evidence="4">Present with 36500 molecules/cell in log phase SD medium.</text>
</comment>
<comment type="similarity">
    <text evidence="11">Belongs to the purine/pyrimidine phosphoribosyltransferase family.</text>
</comment>
<feature type="initiator methionine" description="Removed" evidence="12">
    <location>
        <position position="1"/>
    </location>
</feature>
<feature type="chain" id="PRO_0000257807" description="Hypoxanthine-guanine phosphoribosyltransferase">
    <location>
        <begin position="2"/>
        <end position="221"/>
    </location>
</feature>
<feature type="active site" description="Proton acceptor" evidence="1">
    <location>
        <position position="114"/>
    </location>
</feature>
<feature type="binding site" evidence="5">
    <location>
        <position position="85"/>
    </location>
    <ligand>
        <name>GMP</name>
        <dbReference type="ChEBI" id="CHEBI:58115"/>
    </ligand>
</feature>
<feature type="binding site" evidence="5">
    <location>
        <begin position="110"/>
        <end position="118"/>
    </location>
    <ligand>
        <name>GMP</name>
        <dbReference type="ChEBI" id="CHEBI:58115"/>
    </ligand>
</feature>
<feature type="binding site" evidence="5">
    <location>
        <position position="159"/>
    </location>
    <ligand>
        <name>GMP</name>
        <dbReference type="ChEBI" id="CHEBI:58115"/>
    </ligand>
</feature>
<feature type="binding site" evidence="5">
    <location>
        <begin position="188"/>
        <end position="194"/>
    </location>
    <ligand>
        <name>GMP</name>
        <dbReference type="ChEBI" id="CHEBI:58115"/>
    </ligand>
</feature>
<feature type="modified residue" description="N-acetylserine" evidence="12">
    <location>
        <position position="2"/>
    </location>
</feature>
<feature type="strand" evidence="13">
    <location>
        <begin position="6"/>
        <end position="8"/>
    </location>
</feature>
<feature type="helix" evidence="14">
    <location>
        <begin position="11"/>
        <end position="25"/>
    </location>
</feature>
<feature type="turn" evidence="14">
    <location>
        <begin position="26"/>
        <end position="28"/>
    </location>
</feature>
<feature type="strand" evidence="14">
    <location>
        <begin position="31"/>
        <end position="36"/>
    </location>
</feature>
<feature type="helix" evidence="14">
    <location>
        <begin position="37"/>
        <end position="51"/>
    </location>
</feature>
<feature type="strand" evidence="14">
    <location>
        <begin position="60"/>
        <end position="69"/>
    </location>
</feature>
<feature type="strand" evidence="14">
    <location>
        <begin position="85"/>
        <end position="90"/>
    </location>
</feature>
<feature type="helix" evidence="14">
    <location>
        <begin position="94"/>
        <end position="97"/>
    </location>
</feature>
<feature type="strand" evidence="14">
    <location>
        <begin position="105"/>
        <end position="116"/>
    </location>
</feature>
<feature type="helix" evidence="14">
    <location>
        <begin position="117"/>
        <end position="136"/>
    </location>
</feature>
<feature type="turn" evidence="14">
    <location>
        <begin position="141"/>
        <end position="143"/>
    </location>
</feature>
<feature type="helix" evidence="14">
    <location>
        <begin position="145"/>
        <end position="147"/>
    </location>
</feature>
<feature type="strand" evidence="14">
    <location>
        <begin position="150"/>
        <end position="159"/>
    </location>
</feature>
<feature type="helix" evidence="14">
    <location>
        <begin position="169"/>
        <end position="172"/>
    </location>
</feature>
<feature type="turn" evidence="14">
    <location>
        <begin position="175"/>
        <end position="177"/>
    </location>
</feature>
<feature type="strand" evidence="14">
    <location>
        <begin position="178"/>
        <end position="184"/>
    </location>
</feature>
<feature type="strand" evidence="13">
    <location>
        <begin position="188"/>
        <end position="190"/>
    </location>
</feature>
<feature type="helix" evidence="14">
    <location>
        <begin position="192"/>
        <end position="194"/>
    </location>
</feature>
<feature type="helix" evidence="14">
    <location>
        <begin position="198"/>
        <end position="208"/>
    </location>
</feature>
<accession>Q04178</accession>
<accession>D6VT32</accession>
<proteinExistence type="evidence at protein level"/>
<protein>
    <recommendedName>
        <fullName>Hypoxanthine-guanine phosphoribosyltransferase</fullName>
        <shortName>HGPRT</shortName>
        <shortName>HGPRTase</shortName>
        <ecNumber evidence="5">2.4.2.8</ecNumber>
    </recommendedName>
    <alternativeName>
        <fullName>Bypass of repression by adenine protein 6</fullName>
    </alternativeName>
</protein>
<keyword id="KW-0002">3D-structure</keyword>
<keyword id="KW-0007">Acetylation</keyword>
<keyword id="KW-0963">Cytoplasm</keyword>
<keyword id="KW-0328">Glycosyltransferase</keyword>
<keyword id="KW-0460">Magnesium</keyword>
<keyword id="KW-0479">Metal-binding</keyword>
<keyword id="KW-0547">Nucleotide-binding</keyword>
<keyword id="KW-0539">Nucleus</keyword>
<keyword id="KW-0660">Purine salvage</keyword>
<keyword id="KW-1185">Reference proteome</keyword>
<keyword id="KW-0808">Transferase</keyword>
<name>HPRT_YEAST</name>
<sequence length="221" mass="25191">MSANDKQYISYNNVHQLCQVSAERIKNFKPDLIIAIGGGGFIPARILRTFLKEPGVPTIRIFAIILSLYEDLNSVGSEVEEVGVKVSRTQWIDYEQCKLDLVGKNVLIVDEVDDTRTTLHYALSELEKDAAEQAKAKGIDTEKSPEMKTNFGIFVLHDKQKPKKADLPAEMLNDKNRYFAAKTVPDKWYAYPWESTDIVFHTRMAIEQGNDIFIPEQEHKQ</sequence>
<organism>
    <name type="scientific">Saccharomyces cerevisiae (strain ATCC 204508 / S288c)</name>
    <name type="common">Baker's yeast</name>
    <dbReference type="NCBI Taxonomy" id="559292"/>
    <lineage>
        <taxon>Eukaryota</taxon>
        <taxon>Fungi</taxon>
        <taxon>Dikarya</taxon>
        <taxon>Ascomycota</taxon>
        <taxon>Saccharomycotina</taxon>
        <taxon>Saccharomycetes</taxon>
        <taxon>Saccharomycetales</taxon>
        <taxon>Saccharomycetaceae</taxon>
        <taxon>Saccharomyces</taxon>
    </lineage>
</organism>
<dbReference type="EC" id="2.4.2.8" evidence="5"/>
<dbReference type="EMBL" id="U32274">
    <property type="protein sequence ID" value="AAB64840.1"/>
    <property type="molecule type" value="Genomic_DNA"/>
</dbReference>
<dbReference type="EMBL" id="BK006938">
    <property type="protein sequence ID" value="DAA12242.1"/>
    <property type="molecule type" value="Genomic_DNA"/>
</dbReference>
<dbReference type="PIR" id="S69682">
    <property type="entry name" value="S69682"/>
</dbReference>
<dbReference type="RefSeq" id="NP_010687.3">
    <property type="nucleotide sequence ID" value="NM_001180707.3"/>
</dbReference>
<dbReference type="PDB" id="2JKY">
    <property type="method" value="X-ray"/>
    <property type="resolution" value="2.30 A"/>
    <property type="chains" value="A/B=2-214"/>
</dbReference>
<dbReference type="PDB" id="2JKZ">
    <property type="method" value="X-ray"/>
    <property type="resolution" value="3.45 A"/>
    <property type="chains" value="A/B/C/D=2-221"/>
</dbReference>
<dbReference type="PDB" id="2XBU">
    <property type="method" value="X-ray"/>
    <property type="resolution" value="1.80 A"/>
    <property type="chains" value="A/B=1-221"/>
</dbReference>
<dbReference type="PDBsum" id="2JKY"/>
<dbReference type="PDBsum" id="2JKZ"/>
<dbReference type="PDBsum" id="2XBU"/>
<dbReference type="SMR" id="Q04178"/>
<dbReference type="BioGRID" id="32460">
    <property type="interactions" value="244"/>
</dbReference>
<dbReference type="DIP" id="DIP-4318N"/>
<dbReference type="FunCoup" id="Q04178">
    <property type="interactions" value="166"/>
</dbReference>
<dbReference type="IntAct" id="Q04178">
    <property type="interactions" value="6"/>
</dbReference>
<dbReference type="STRING" id="4932.YDR399W"/>
<dbReference type="iPTMnet" id="Q04178"/>
<dbReference type="PaxDb" id="4932-YDR399W"/>
<dbReference type="PeptideAtlas" id="Q04178"/>
<dbReference type="EnsemblFungi" id="YDR399W_mRNA">
    <property type="protein sequence ID" value="YDR399W"/>
    <property type="gene ID" value="YDR399W"/>
</dbReference>
<dbReference type="GeneID" id="852008"/>
<dbReference type="KEGG" id="sce:YDR399W"/>
<dbReference type="AGR" id="SGD:S000002807"/>
<dbReference type="SGD" id="S000002807">
    <property type="gene designation" value="HPT1"/>
</dbReference>
<dbReference type="VEuPathDB" id="FungiDB:YDR399W"/>
<dbReference type="eggNOG" id="ENOG502QRN9">
    <property type="taxonomic scope" value="Eukaryota"/>
</dbReference>
<dbReference type="GeneTree" id="ENSGT00940000176607"/>
<dbReference type="HOGENOM" id="CLU_092544_0_0_1"/>
<dbReference type="InParanoid" id="Q04178"/>
<dbReference type="OMA" id="IMKTGNY"/>
<dbReference type="OrthoDB" id="9973266at2759"/>
<dbReference type="BioCyc" id="MetaCyc:YDR399W-MONOMER"/>
<dbReference type="BioCyc" id="YEAST:YDR399W-MONOMER"/>
<dbReference type="SABIO-RK" id="Q04178"/>
<dbReference type="UniPathway" id="UPA00591">
    <property type="reaction ID" value="UER00648"/>
</dbReference>
<dbReference type="BioGRID-ORCS" id="852008">
    <property type="hits" value="1 hit in 10 CRISPR screens"/>
</dbReference>
<dbReference type="EvolutionaryTrace" id="Q04178"/>
<dbReference type="PRO" id="PR:Q04178"/>
<dbReference type="Proteomes" id="UP000002311">
    <property type="component" value="Chromosome IV"/>
</dbReference>
<dbReference type="RNAct" id="Q04178">
    <property type="molecule type" value="protein"/>
</dbReference>
<dbReference type="GO" id="GO:0005737">
    <property type="term" value="C:cytoplasm"/>
    <property type="evidence" value="ECO:0007005"/>
    <property type="project" value="SGD"/>
</dbReference>
<dbReference type="GO" id="GO:0005634">
    <property type="term" value="C:nucleus"/>
    <property type="evidence" value="ECO:0007005"/>
    <property type="project" value="SGD"/>
</dbReference>
<dbReference type="GO" id="GO:0052657">
    <property type="term" value="F:guanine phosphoribosyltransferase activity"/>
    <property type="evidence" value="ECO:0007669"/>
    <property type="project" value="RHEA"/>
</dbReference>
<dbReference type="GO" id="GO:0004422">
    <property type="term" value="F:hypoxanthine phosphoribosyltransferase activity"/>
    <property type="evidence" value="ECO:0000314"/>
    <property type="project" value="SGD"/>
</dbReference>
<dbReference type="GO" id="GO:0046872">
    <property type="term" value="F:metal ion binding"/>
    <property type="evidence" value="ECO:0007669"/>
    <property type="project" value="UniProtKB-KW"/>
</dbReference>
<dbReference type="GO" id="GO:0000166">
    <property type="term" value="F:nucleotide binding"/>
    <property type="evidence" value="ECO:0007669"/>
    <property type="project" value="UniProtKB-KW"/>
</dbReference>
<dbReference type="GO" id="GO:0032263">
    <property type="term" value="P:GMP salvage"/>
    <property type="evidence" value="ECO:0000314"/>
    <property type="project" value="SGD"/>
</dbReference>
<dbReference type="GO" id="GO:0046100">
    <property type="term" value="P:hypoxanthine metabolic process"/>
    <property type="evidence" value="ECO:0000318"/>
    <property type="project" value="GO_Central"/>
</dbReference>
<dbReference type="GO" id="GO:0032264">
    <property type="term" value="P:IMP salvage"/>
    <property type="evidence" value="ECO:0000314"/>
    <property type="project" value="SGD"/>
</dbReference>
<dbReference type="GO" id="GO:0006166">
    <property type="term" value="P:purine ribonucleoside salvage"/>
    <property type="evidence" value="ECO:0007669"/>
    <property type="project" value="UniProtKB-KW"/>
</dbReference>
<dbReference type="GO" id="GO:0032265">
    <property type="term" value="P:XMP salvage"/>
    <property type="evidence" value="ECO:0000318"/>
    <property type="project" value="GO_Central"/>
</dbReference>
<dbReference type="CDD" id="cd06223">
    <property type="entry name" value="PRTases_typeI"/>
    <property type="match status" value="1"/>
</dbReference>
<dbReference type="FunFam" id="3.40.50.2020:FF:000033">
    <property type="entry name" value="Xanthine phosphoribosyltransferase 1"/>
    <property type="match status" value="1"/>
</dbReference>
<dbReference type="Gene3D" id="3.40.50.2020">
    <property type="match status" value="1"/>
</dbReference>
<dbReference type="InterPro" id="IPR000836">
    <property type="entry name" value="PRibTrfase_dom"/>
</dbReference>
<dbReference type="InterPro" id="IPR029057">
    <property type="entry name" value="PRTase-like"/>
</dbReference>
<dbReference type="PANTHER" id="PTHR43363">
    <property type="entry name" value="HYPOXANTHINE PHOSPHORIBOSYLTRANSFERASE"/>
    <property type="match status" value="1"/>
</dbReference>
<dbReference type="PANTHER" id="PTHR43363:SF1">
    <property type="entry name" value="HYPOXANTHINE-GUANINE PHOSPHORIBOSYLTRANSFERASE"/>
    <property type="match status" value="1"/>
</dbReference>
<dbReference type="Pfam" id="PF00156">
    <property type="entry name" value="Pribosyltran"/>
    <property type="match status" value="1"/>
</dbReference>
<dbReference type="SUPFAM" id="SSF53271">
    <property type="entry name" value="PRTase-like"/>
    <property type="match status" value="1"/>
</dbReference>
<reference key="1">
    <citation type="journal article" date="1997" name="Nature">
        <title>The nucleotide sequence of Saccharomyces cerevisiae chromosome IV.</title>
        <authorList>
            <person name="Jacq C."/>
            <person name="Alt-Moerbe J."/>
            <person name="Andre B."/>
            <person name="Arnold W."/>
            <person name="Bahr A."/>
            <person name="Ballesta J.P.G."/>
            <person name="Bargues M."/>
            <person name="Baron L."/>
            <person name="Becker A."/>
            <person name="Biteau N."/>
            <person name="Bloecker H."/>
            <person name="Blugeon C."/>
            <person name="Boskovic J."/>
            <person name="Brandt P."/>
            <person name="Brueckner M."/>
            <person name="Buitrago M.J."/>
            <person name="Coster F."/>
            <person name="Delaveau T."/>
            <person name="del Rey F."/>
            <person name="Dujon B."/>
            <person name="Eide L.G."/>
            <person name="Garcia-Cantalejo J.M."/>
            <person name="Goffeau A."/>
            <person name="Gomez-Peris A."/>
            <person name="Granotier C."/>
            <person name="Hanemann V."/>
            <person name="Hankeln T."/>
            <person name="Hoheisel J.D."/>
            <person name="Jaeger W."/>
            <person name="Jimenez A."/>
            <person name="Jonniaux J.-L."/>
            <person name="Kraemer C."/>
            <person name="Kuester H."/>
            <person name="Laamanen P."/>
            <person name="Legros Y."/>
            <person name="Louis E.J."/>
            <person name="Moeller-Rieker S."/>
            <person name="Monnet A."/>
            <person name="Moro M."/>
            <person name="Mueller-Auer S."/>
            <person name="Nussbaumer B."/>
            <person name="Paricio N."/>
            <person name="Paulin L."/>
            <person name="Perea J."/>
            <person name="Perez-Alonso M."/>
            <person name="Perez-Ortin J.E."/>
            <person name="Pohl T.M."/>
            <person name="Prydz H."/>
            <person name="Purnelle B."/>
            <person name="Rasmussen S.W."/>
            <person name="Remacha M.A."/>
            <person name="Revuelta J.L."/>
            <person name="Rieger M."/>
            <person name="Salom D."/>
            <person name="Saluz H.P."/>
            <person name="Saiz J.E."/>
            <person name="Saren A.-M."/>
            <person name="Schaefer M."/>
            <person name="Scharfe M."/>
            <person name="Schmidt E.R."/>
            <person name="Schneider C."/>
            <person name="Scholler P."/>
            <person name="Schwarz S."/>
            <person name="Soler-Mira A."/>
            <person name="Urrestarazu L.A."/>
            <person name="Verhasselt P."/>
            <person name="Vissers S."/>
            <person name="Voet M."/>
            <person name="Volckaert G."/>
            <person name="Wagner G."/>
            <person name="Wambutt R."/>
            <person name="Wedler E."/>
            <person name="Wedler H."/>
            <person name="Woelfl S."/>
            <person name="Harris D.E."/>
            <person name="Bowman S."/>
            <person name="Brown D."/>
            <person name="Churcher C.M."/>
            <person name="Connor R."/>
            <person name="Dedman K."/>
            <person name="Gentles S."/>
            <person name="Hamlin N."/>
            <person name="Hunt S."/>
            <person name="Jones L."/>
            <person name="McDonald S."/>
            <person name="Murphy L.D."/>
            <person name="Niblett D."/>
            <person name="Odell C."/>
            <person name="Oliver K."/>
            <person name="Rajandream M.A."/>
            <person name="Richards C."/>
            <person name="Shore L."/>
            <person name="Walsh S.V."/>
            <person name="Barrell B.G."/>
            <person name="Dietrich F.S."/>
            <person name="Mulligan J.T."/>
            <person name="Allen E."/>
            <person name="Araujo R."/>
            <person name="Aviles E."/>
            <person name="Berno A."/>
            <person name="Carpenter J."/>
            <person name="Chen E."/>
            <person name="Cherry J.M."/>
            <person name="Chung E."/>
            <person name="Duncan M."/>
            <person name="Hunicke-Smith S."/>
            <person name="Hyman R.W."/>
            <person name="Komp C."/>
            <person name="Lashkari D."/>
            <person name="Lew H."/>
            <person name="Lin D."/>
            <person name="Mosedale D."/>
            <person name="Nakahara K."/>
            <person name="Namath A."/>
            <person name="Oefner P."/>
            <person name="Oh C."/>
            <person name="Petel F.X."/>
            <person name="Roberts D."/>
            <person name="Schramm S."/>
            <person name="Schroeder M."/>
            <person name="Shogren T."/>
            <person name="Shroff N."/>
            <person name="Winant A."/>
            <person name="Yelton M.A."/>
            <person name="Botstein D."/>
            <person name="Davis R.W."/>
            <person name="Johnston M."/>
            <person name="Andrews S."/>
            <person name="Brinkman R."/>
            <person name="Cooper J."/>
            <person name="Ding H."/>
            <person name="Du Z."/>
            <person name="Favello A."/>
            <person name="Fulton L."/>
            <person name="Gattung S."/>
            <person name="Greco T."/>
            <person name="Hallsworth K."/>
            <person name="Hawkins J."/>
            <person name="Hillier L.W."/>
            <person name="Jier M."/>
            <person name="Johnson D."/>
            <person name="Johnston L."/>
            <person name="Kirsten J."/>
            <person name="Kucaba T."/>
            <person name="Langston Y."/>
            <person name="Latreille P."/>
            <person name="Le T."/>
            <person name="Mardis E."/>
            <person name="Menezes S."/>
            <person name="Miller N."/>
            <person name="Nhan M."/>
            <person name="Pauley A."/>
            <person name="Peluso D."/>
            <person name="Rifkin L."/>
            <person name="Riles L."/>
            <person name="Taich A."/>
            <person name="Trevaskis E."/>
            <person name="Vignati D."/>
            <person name="Wilcox L."/>
            <person name="Wohldman P."/>
            <person name="Vaudin M."/>
            <person name="Wilson R."/>
            <person name="Waterston R."/>
            <person name="Albermann K."/>
            <person name="Hani J."/>
            <person name="Heumann K."/>
            <person name="Kleine K."/>
            <person name="Mewes H.-W."/>
            <person name="Zollner A."/>
            <person name="Zaccaria P."/>
        </authorList>
    </citation>
    <scope>NUCLEOTIDE SEQUENCE [LARGE SCALE GENOMIC DNA]</scope>
    <source>
        <strain>ATCC 204508 / S288c</strain>
    </source>
</reference>
<reference key="2">
    <citation type="journal article" date="2014" name="G3 (Bethesda)">
        <title>The reference genome sequence of Saccharomyces cerevisiae: Then and now.</title>
        <authorList>
            <person name="Engel S.R."/>
            <person name="Dietrich F.S."/>
            <person name="Fisk D.G."/>
            <person name="Binkley G."/>
            <person name="Balakrishnan R."/>
            <person name="Costanzo M.C."/>
            <person name="Dwight S.S."/>
            <person name="Hitz B.C."/>
            <person name="Karra K."/>
            <person name="Nash R.S."/>
            <person name="Weng S."/>
            <person name="Wong E.D."/>
            <person name="Lloyd P."/>
            <person name="Skrzypek M.S."/>
            <person name="Miyasato S.R."/>
            <person name="Simison M."/>
            <person name="Cherry J.M."/>
        </authorList>
    </citation>
    <scope>GENOME REANNOTATION</scope>
    <source>
        <strain>ATCC 204508 / S288c</strain>
    </source>
</reference>
<reference key="3">
    <citation type="journal article" date="1979" name="Eur. J. Biochem.">
        <title>Purification and characterization of the hypoxanthine-guanine phosphoribosyltransferase from Saccharomyces cerevisiae.</title>
        <authorList>
            <person name="Schmidt R."/>
            <person name="Wiegand H."/>
            <person name="Reichert U."/>
        </authorList>
    </citation>
    <scope>FUNCTION</scope>
    <scope>BIOPHYSICOCHEMICAL PROPERTIES</scope>
</reference>
<reference key="4">
    <citation type="journal article" date="1981" name="Biochemistry">
        <title>Purification and characterization of hypoxanthine-guanine phosphoribosyltransferase from Saccharomyces cerevisiae.</title>
        <authorList>
            <person name="Nussbaum R.L."/>
            <person name="Caskey C.T."/>
        </authorList>
    </citation>
    <scope>FUNCTION</scope>
    <scope>SUBUNIT</scope>
    <scope>BIOPHYSICOCHEMICAL PROPERTIES</scope>
</reference>
<reference key="5">
    <citation type="journal article" date="1982" name="J. Biol. Chem.">
        <title>Studies of the kinetic mechanism of hypoxanthine-guanine phosphoribosyltransferase from yeast.</title>
        <authorList>
            <person name="Ali L.Z."/>
            <person name="Sloan D.L."/>
        </authorList>
    </citation>
    <scope>FUNCTION</scope>
    <scope>BIOPHYSICOCHEMICAL PROPERTIES</scope>
</reference>
<reference key="6">
    <citation type="journal article" date="1984" name="J. Gen. Microbiol.">
        <title>Adenine phosphoribosyltransferase mutants in Saccharomyces cerevisiae.</title>
        <authorList>
            <person name="Woods R.A."/>
            <person name="Roberts D.G."/>
            <person name="Stein D.S."/>
            <person name="Filpula D."/>
        </authorList>
    </citation>
    <scope>FUNCTION</scope>
</reference>
<reference key="7">
    <citation type="journal article" date="1997" name="Genetics">
        <title>The isolation and characterization of Saccharomyces cerevisiae mutants that constitutively express purine biosynthetic genes.</title>
        <authorList>
            <person name="Guetsova M.L."/>
            <person name="Lecoq K."/>
            <person name="Daignan-Fornier B."/>
        </authorList>
    </citation>
    <scope>FUNCTION</scope>
</reference>
<reference key="8">
    <citation type="journal article" date="2001" name="J. Biol. Chem.">
        <title>Transcriptional regulation of the yeast gmp synthesis pathway by its end products.</title>
        <authorList>
            <person name="Escobar-Henriques M."/>
            <person name="Daignan-Fornier B."/>
        </authorList>
    </citation>
    <scope>FUNCTION</scope>
</reference>
<reference key="9">
    <citation type="journal article" date="2003" name="Nature">
        <title>Global analysis of protein localization in budding yeast.</title>
        <authorList>
            <person name="Huh W.-K."/>
            <person name="Falvo J.V."/>
            <person name="Gerke L.C."/>
            <person name="Carroll A.S."/>
            <person name="Howson R.W."/>
            <person name="Weissman J.S."/>
            <person name="O'Shea E.K."/>
        </authorList>
    </citation>
    <scope>SUBCELLULAR LOCATION [LARGE SCALE ANALYSIS]</scope>
</reference>
<reference key="10">
    <citation type="journal article" date="2003" name="Nature">
        <title>Global analysis of protein expression in yeast.</title>
        <authorList>
            <person name="Ghaemmaghami S."/>
            <person name="Huh W.-K."/>
            <person name="Bower K."/>
            <person name="Howson R.W."/>
            <person name="Belle A."/>
            <person name="Dephoure N."/>
            <person name="O'Shea E.K."/>
            <person name="Weissman J.S."/>
        </authorList>
    </citation>
    <scope>LEVEL OF PROTEIN EXPRESSION [LARGE SCALE ANALYSIS]</scope>
</reference>
<reference key="11">
    <citation type="journal article" date="2012" name="Proc. Natl. Acad. Sci. U.S.A.">
        <title>N-terminal acetylome analyses and functional insights of the N-terminal acetyltransferase NatB.</title>
        <authorList>
            <person name="Van Damme P."/>
            <person name="Lasa M."/>
            <person name="Polevoda B."/>
            <person name="Gazquez C."/>
            <person name="Elosegui-Artola A."/>
            <person name="Kim D.S."/>
            <person name="De Juan-Pardo E."/>
            <person name="Demeyer K."/>
            <person name="Hole K."/>
            <person name="Larrea E."/>
            <person name="Timmerman E."/>
            <person name="Prieto J."/>
            <person name="Arnesen T."/>
            <person name="Sherman F."/>
            <person name="Gevaert K."/>
            <person name="Aldabe R."/>
        </authorList>
    </citation>
    <scope>ACETYLATION [LARGE SCALE ANALYSIS] AT SER-2</scope>
    <scope>CLEAVAGE OF INITIATOR METHIONINE [LARGE SCALE ANALYSIS]</scope>
    <scope>IDENTIFICATION BY MASS SPECTROMETRY [LARGE SCALE ANALYSIS]</scope>
</reference>
<reference key="12">
    <citation type="journal article" date="2008" name="Genetics">
        <title>Lethal accumulation of guanylic nucleotides in Saccharomyces cerevisiae HPT1-deregulated mutants.</title>
        <authorList>
            <person name="Breton A."/>
            <person name="Pinson B."/>
            <person name="Coulpier F."/>
            <person name="Giraud M.F."/>
            <person name="Dautant A."/>
            <person name="Daignan-Fornier B."/>
        </authorList>
    </citation>
    <scope>X-RAY CRYSTALLOGRAPHY (2.30 ANGSTROMS) IN COMPLEX WITH MAGNESIUM AND GMP</scope>
    <scope>CATALYTIC ACTIVITY</scope>
    <scope>FUNCTION</scope>
    <scope>ACTIVITY REGULATION</scope>
</reference>
<evidence type="ECO:0000250" key="1"/>
<evidence type="ECO:0000269" key="2">
    <source>
    </source>
</evidence>
<evidence type="ECO:0000269" key="3">
    <source>
    </source>
</evidence>
<evidence type="ECO:0000269" key="4">
    <source>
    </source>
</evidence>
<evidence type="ECO:0000269" key="5">
    <source>
    </source>
</evidence>
<evidence type="ECO:0000269" key="6">
    <source>
    </source>
</evidence>
<evidence type="ECO:0000269" key="7">
    <source>
    </source>
</evidence>
<evidence type="ECO:0000269" key="8">
    <source>
    </source>
</evidence>
<evidence type="ECO:0000269" key="9">
    <source>
    </source>
</evidence>
<evidence type="ECO:0000269" key="10">
    <source>
    </source>
</evidence>
<evidence type="ECO:0000305" key="11"/>
<evidence type="ECO:0007744" key="12">
    <source>
    </source>
</evidence>
<evidence type="ECO:0007829" key="13">
    <source>
        <dbReference type="PDB" id="2JKY"/>
    </source>
</evidence>
<evidence type="ECO:0007829" key="14">
    <source>
        <dbReference type="PDB" id="2XBU"/>
    </source>
</evidence>
<gene>
    <name type="primary">HPT1</name>
    <name type="synonym">BRA6</name>
    <name type="ordered locus">YDR399W</name>
    <name type="ORF">D9509.18</name>
</gene>